<comment type="subunit">
    <text evidence="1">Homodimer and heterodimers.</text>
</comment>
<comment type="subcellular location">
    <subcellularLocation>
        <location evidence="1">Cell membrane</location>
        <topology evidence="1">Multi-pass membrane protein</topology>
    </subcellularLocation>
</comment>
<comment type="similarity">
    <text evidence="3">Belongs to the Casparian strip membrane proteins (CASP) family.</text>
</comment>
<evidence type="ECO:0000250" key="1"/>
<evidence type="ECO:0000255" key="2"/>
<evidence type="ECO:0000305" key="3"/>
<name>CSPL4_POPTR</name>
<gene>
    <name type="ORF">POPTR_0013s13520g</name>
</gene>
<organism>
    <name type="scientific">Populus trichocarpa</name>
    <name type="common">Western balsam poplar</name>
    <name type="synonym">Populus balsamifera subsp. trichocarpa</name>
    <dbReference type="NCBI Taxonomy" id="3694"/>
    <lineage>
        <taxon>Eukaryota</taxon>
        <taxon>Viridiplantae</taxon>
        <taxon>Streptophyta</taxon>
        <taxon>Embryophyta</taxon>
        <taxon>Tracheophyta</taxon>
        <taxon>Spermatophyta</taxon>
        <taxon>Magnoliopsida</taxon>
        <taxon>eudicotyledons</taxon>
        <taxon>Gunneridae</taxon>
        <taxon>Pentapetalae</taxon>
        <taxon>rosids</taxon>
        <taxon>fabids</taxon>
        <taxon>Malpighiales</taxon>
        <taxon>Salicaceae</taxon>
        <taxon>Saliceae</taxon>
        <taxon>Populus</taxon>
    </lineage>
</organism>
<proteinExistence type="inferred from homology"/>
<keyword id="KW-1003">Cell membrane</keyword>
<keyword id="KW-0325">Glycoprotein</keyword>
<keyword id="KW-0472">Membrane</keyword>
<keyword id="KW-1185">Reference proteome</keyword>
<keyword id="KW-0812">Transmembrane</keyword>
<keyword id="KW-1133">Transmembrane helix</keyword>
<feature type="chain" id="PRO_0000412035" description="CASP-like protein 1C3">
    <location>
        <begin position="1"/>
        <end position="171"/>
    </location>
</feature>
<feature type="topological domain" description="Cytoplasmic" evidence="2">
    <location>
        <begin position="1"/>
        <end position="6"/>
    </location>
</feature>
<feature type="transmembrane region" description="Helical" evidence="2">
    <location>
        <begin position="7"/>
        <end position="27"/>
    </location>
</feature>
<feature type="topological domain" description="Extracellular" evidence="2">
    <location>
        <begin position="28"/>
        <end position="52"/>
    </location>
</feature>
<feature type="transmembrane region" description="Helical" evidence="2">
    <location>
        <begin position="53"/>
        <end position="73"/>
    </location>
</feature>
<feature type="topological domain" description="Cytoplasmic" evidence="2">
    <location>
        <begin position="74"/>
        <end position="79"/>
    </location>
</feature>
<feature type="transmembrane region" description="Helical" evidence="2">
    <location>
        <begin position="80"/>
        <end position="100"/>
    </location>
</feature>
<feature type="topological domain" description="Extracellular" evidence="2">
    <location>
        <begin position="101"/>
        <end position="130"/>
    </location>
</feature>
<feature type="transmembrane region" description="Helical" evidence="2">
    <location>
        <begin position="131"/>
        <end position="151"/>
    </location>
</feature>
<feature type="topological domain" description="Cytoplasmic" evidence="2">
    <location>
        <begin position="152"/>
        <end position="171"/>
    </location>
</feature>
<feature type="glycosylation site" description="N-linked (GlcNAc...) asparagine" evidence="2">
    <location>
        <position position="110"/>
    </location>
</feature>
<reference key="1">
    <citation type="journal article" date="2006" name="Science">
        <title>The genome of black cottonwood, Populus trichocarpa (Torr. &amp; Gray).</title>
        <authorList>
            <person name="Tuskan G.A."/>
            <person name="Difazio S."/>
            <person name="Jansson S."/>
            <person name="Bohlmann J."/>
            <person name="Grigoriev I."/>
            <person name="Hellsten U."/>
            <person name="Putnam N."/>
            <person name="Ralph S."/>
            <person name="Rombauts S."/>
            <person name="Salamov A."/>
            <person name="Schein J."/>
            <person name="Sterck L."/>
            <person name="Aerts A."/>
            <person name="Bhalerao R.R."/>
            <person name="Bhalerao R.P."/>
            <person name="Blaudez D."/>
            <person name="Boerjan W."/>
            <person name="Brun A."/>
            <person name="Brunner A."/>
            <person name="Busov V."/>
            <person name="Campbell M."/>
            <person name="Carlson J."/>
            <person name="Chalot M."/>
            <person name="Chapman J."/>
            <person name="Chen G.-L."/>
            <person name="Cooper D."/>
            <person name="Coutinho P.M."/>
            <person name="Couturier J."/>
            <person name="Covert S."/>
            <person name="Cronk Q."/>
            <person name="Cunningham R."/>
            <person name="Davis J."/>
            <person name="Degroeve S."/>
            <person name="Dejardin A."/>
            <person name="dePamphilis C.W."/>
            <person name="Detter J."/>
            <person name="Dirks B."/>
            <person name="Dubchak I."/>
            <person name="Duplessis S."/>
            <person name="Ehlting J."/>
            <person name="Ellis B."/>
            <person name="Gendler K."/>
            <person name="Goodstein D."/>
            <person name="Gribskov M."/>
            <person name="Grimwood J."/>
            <person name="Groover A."/>
            <person name="Gunter L."/>
            <person name="Hamberger B."/>
            <person name="Heinze B."/>
            <person name="Helariutta Y."/>
            <person name="Henrissat B."/>
            <person name="Holligan D."/>
            <person name="Holt R."/>
            <person name="Huang W."/>
            <person name="Islam-Faridi N."/>
            <person name="Jones S."/>
            <person name="Jones-Rhoades M."/>
            <person name="Jorgensen R."/>
            <person name="Joshi C."/>
            <person name="Kangasjaervi J."/>
            <person name="Karlsson J."/>
            <person name="Kelleher C."/>
            <person name="Kirkpatrick R."/>
            <person name="Kirst M."/>
            <person name="Kohler A."/>
            <person name="Kalluri U."/>
            <person name="Larimer F."/>
            <person name="Leebens-Mack J."/>
            <person name="Leple J.-C."/>
            <person name="Locascio P."/>
            <person name="Lou Y."/>
            <person name="Lucas S."/>
            <person name="Martin F."/>
            <person name="Montanini B."/>
            <person name="Napoli C."/>
            <person name="Nelson D.R."/>
            <person name="Nelson C."/>
            <person name="Nieminen K."/>
            <person name="Nilsson O."/>
            <person name="Pereda V."/>
            <person name="Peter G."/>
            <person name="Philippe R."/>
            <person name="Pilate G."/>
            <person name="Poliakov A."/>
            <person name="Razumovskaya J."/>
            <person name="Richardson P."/>
            <person name="Rinaldi C."/>
            <person name="Ritland K."/>
            <person name="Rouze P."/>
            <person name="Ryaboy D."/>
            <person name="Schmutz J."/>
            <person name="Schrader J."/>
            <person name="Segerman B."/>
            <person name="Shin H."/>
            <person name="Siddiqui A."/>
            <person name="Sterky F."/>
            <person name="Terry A."/>
            <person name="Tsai C.-J."/>
            <person name="Uberbacher E."/>
            <person name="Unneberg P."/>
            <person name="Vahala J."/>
            <person name="Wall K."/>
            <person name="Wessler S."/>
            <person name="Yang G."/>
            <person name="Yin T."/>
            <person name="Douglas C."/>
            <person name="Marra M."/>
            <person name="Sandberg G."/>
            <person name="Van de Peer Y."/>
            <person name="Rokhsar D.S."/>
        </authorList>
    </citation>
    <scope>NUCLEOTIDE SEQUENCE [LARGE SCALE GENOMIC DNA]</scope>
    <source>
        <strain>cv. Nisqually</strain>
    </source>
</reference>
<reference key="2">
    <citation type="submission" date="2008-12" db="EMBL/GenBank/DDBJ databases">
        <authorList>
            <consortium name="US DOE Joint Genome Institute (JGI-PGF)"/>
            <person name="Grigoriev I.V."/>
            <person name="Terry A."/>
            <person name="Salamov A.A."/>
            <person name="Otillar R."/>
            <person name="Lou Y."/>
            <person name="Lucas S."/>
            <person name="Hammon N."/>
            <person name="Glavina del Rio T."/>
            <person name="Detter J."/>
            <person name="Kalin E."/>
            <person name="Tice H."/>
            <person name="Pitluck S."/>
            <person name="Chapman J."/>
            <person name="Putnam N.H."/>
            <person name="Brunner A."/>
            <person name="Busov V."/>
            <person name="Campbell M."/>
            <person name="Chalot M."/>
            <person name="Covert S."/>
            <person name="Davis J."/>
            <person name="DiFazio S."/>
            <person name="Gribskov M."/>
            <person name="Gunter L."/>
            <person name="Hamberger B."/>
            <person name="Jansson S."/>
            <person name="Joshi C."/>
            <person name="Larimer F."/>
            <person name="Martin F."/>
            <person name="Napoli C."/>
            <person name="Nelson D."/>
            <person name="Ralph S."/>
            <person name="Rombauts S."/>
            <person name="Rouze P."/>
            <person name="Schrader J."/>
            <person name="Tsai C."/>
            <person name="Vahala J."/>
            <person name="Tuskan G."/>
            <person name="Rokhsar D."/>
        </authorList>
    </citation>
    <scope>GENOME REANNOTATION</scope>
    <source>
        <strain>cv. Nisqually</strain>
    </source>
</reference>
<reference key="3">
    <citation type="journal article" date="2014" name="Plant Physiol.">
        <title>Functional and evolutionary analysis of the CASPARIAN STRIP MEMBRANE DOMAIN PROTEIN family.</title>
        <authorList>
            <person name="Roppolo D."/>
            <person name="Boeckmann B."/>
            <person name="Pfister A."/>
            <person name="Boutet E."/>
            <person name="Rubio M.C."/>
            <person name="Denervaud-Tendon V."/>
            <person name="Vermeer J.E."/>
            <person name="Gheyselinck J."/>
            <person name="Xenarios I."/>
            <person name="Geldner N."/>
        </authorList>
    </citation>
    <scope>GENE FAMILY</scope>
    <scope>NOMENCLATURE</scope>
</reference>
<accession>B9N5U6</accession>
<accession>U5FSV5</accession>
<dbReference type="EMBL" id="CM009302">
    <property type="protein sequence ID" value="ERP54293.1"/>
    <property type="molecule type" value="Genomic_DNA"/>
</dbReference>
<dbReference type="SMR" id="B9N5U6"/>
<dbReference type="STRING" id="3694.B9N5U6"/>
<dbReference type="EnsemblPlants" id="Potri.013G131700.1.v4.1">
    <property type="protein sequence ID" value="Potri.013G131700.1.v4.1"/>
    <property type="gene ID" value="Potri.013G131700.v4.1"/>
</dbReference>
<dbReference type="Gramene" id="Potri.013G131700.1.v4.1">
    <property type="protein sequence ID" value="Potri.013G131700.1.v4.1"/>
    <property type="gene ID" value="Potri.013G131700.v4.1"/>
</dbReference>
<dbReference type="KEGG" id="pop:18104637"/>
<dbReference type="eggNOG" id="ENOG502RZXX">
    <property type="taxonomic scope" value="Eukaryota"/>
</dbReference>
<dbReference type="HOGENOM" id="CLU_066104_3_0_1"/>
<dbReference type="InParanoid" id="B9N5U6"/>
<dbReference type="OMA" id="WFVIANA"/>
<dbReference type="OrthoDB" id="1906221at2759"/>
<dbReference type="Proteomes" id="UP000006729">
    <property type="component" value="Chromosome 13"/>
</dbReference>
<dbReference type="GO" id="GO:0005886">
    <property type="term" value="C:plasma membrane"/>
    <property type="evidence" value="ECO:0000318"/>
    <property type="project" value="GO_Central"/>
</dbReference>
<dbReference type="InterPro" id="IPR006459">
    <property type="entry name" value="CASP/CASPL"/>
</dbReference>
<dbReference type="InterPro" id="IPR006702">
    <property type="entry name" value="CASP_dom"/>
</dbReference>
<dbReference type="InterPro" id="IPR044173">
    <property type="entry name" value="CASPL"/>
</dbReference>
<dbReference type="NCBIfam" id="TIGR01569">
    <property type="entry name" value="A_tha_TIGR01569"/>
    <property type="match status" value="1"/>
</dbReference>
<dbReference type="PANTHER" id="PTHR36488">
    <property type="entry name" value="CASP-LIKE PROTEIN 1U1"/>
    <property type="match status" value="1"/>
</dbReference>
<dbReference type="PANTHER" id="PTHR36488:SF8">
    <property type="entry name" value="CASP-LIKE PROTEIN 1U1"/>
    <property type="match status" value="1"/>
</dbReference>
<dbReference type="Pfam" id="PF04535">
    <property type="entry name" value="CASP_dom"/>
    <property type="match status" value="1"/>
</dbReference>
<sequence length="171" mass="18419">MVKPKRLLSLLLRLIAFGATLAAVIIMATSHEKGSFFALSYEAKYSDTPAFKYFVIANAIVTVYGFLALFIPSESPLWRLVLALDLVFTMLLISSISAALAVAQVGKKGNSSAGWLPVCGQVTKYCNQVTGALVAGFIAIITYIILLLYSIYTFLNSLLGKTPCRLSSPGI</sequence>
<protein>
    <recommendedName>
        <fullName>CASP-like protein 1C3</fullName>
        <shortName>PtCASPL1C3</shortName>
    </recommendedName>
</protein>